<proteinExistence type="inferred from homology"/>
<protein>
    <recommendedName>
        <fullName evidence="1">Fluoride export protein 2</fullName>
    </recommendedName>
</protein>
<sequence>MLLTQSYFCIMSMLGTLARLGLTALNTYPGAPFSGLLWVQFVGCVIMGFCQTESVFFPRPKHNATFLLAITTGFCGSLTTFSSWMLQMFTGMANLDPFERRGRGYSFLSVVSDFMVTMCIAMSSLIWGKQIGKTTGQWRIGKVAFAWPIPAHTHIVVRVLLLLLSICFFVGAAFYTAYTTNVTHRGIGFSLIFSPFAALTRLYLARFLNSPQYFIPYGTLCANVFATLLLSIMYMIPQITHCTPVSRSVMYGIQNGFCAVLSTLSTFSNELHTMPIKRAYIYCIISVAISFSICVIVDGATAWGHGYTEKY</sequence>
<keyword id="KW-1003">Cell membrane</keyword>
<keyword id="KW-0325">Glycoprotein</keyword>
<keyword id="KW-0407">Ion channel</keyword>
<keyword id="KW-0406">Ion transport</keyword>
<keyword id="KW-0472">Membrane</keyword>
<keyword id="KW-1185">Reference proteome</keyword>
<keyword id="KW-0812">Transmembrane</keyword>
<keyword id="KW-1133">Transmembrane helix</keyword>
<keyword id="KW-0813">Transport</keyword>
<reference key="1">
    <citation type="journal article" date="2002" name="Nature">
        <title>The genome sequence of Schizosaccharomyces pombe.</title>
        <authorList>
            <person name="Wood V."/>
            <person name="Gwilliam R."/>
            <person name="Rajandream M.A."/>
            <person name="Lyne M.H."/>
            <person name="Lyne R."/>
            <person name="Stewart A."/>
            <person name="Sgouros J.G."/>
            <person name="Peat N."/>
            <person name="Hayles J."/>
            <person name="Baker S.G."/>
            <person name="Basham D."/>
            <person name="Bowman S."/>
            <person name="Brooks K."/>
            <person name="Brown D."/>
            <person name="Brown S."/>
            <person name="Chillingworth T."/>
            <person name="Churcher C.M."/>
            <person name="Collins M."/>
            <person name="Connor R."/>
            <person name="Cronin A."/>
            <person name="Davis P."/>
            <person name="Feltwell T."/>
            <person name="Fraser A."/>
            <person name="Gentles S."/>
            <person name="Goble A."/>
            <person name="Hamlin N."/>
            <person name="Harris D.E."/>
            <person name="Hidalgo J."/>
            <person name="Hodgson G."/>
            <person name="Holroyd S."/>
            <person name="Hornsby T."/>
            <person name="Howarth S."/>
            <person name="Huckle E.J."/>
            <person name="Hunt S."/>
            <person name="Jagels K."/>
            <person name="James K.D."/>
            <person name="Jones L."/>
            <person name="Jones M."/>
            <person name="Leather S."/>
            <person name="McDonald S."/>
            <person name="McLean J."/>
            <person name="Mooney P."/>
            <person name="Moule S."/>
            <person name="Mungall K.L."/>
            <person name="Murphy L.D."/>
            <person name="Niblett D."/>
            <person name="Odell C."/>
            <person name="Oliver K."/>
            <person name="O'Neil S."/>
            <person name="Pearson D."/>
            <person name="Quail M.A."/>
            <person name="Rabbinowitsch E."/>
            <person name="Rutherford K.M."/>
            <person name="Rutter S."/>
            <person name="Saunders D."/>
            <person name="Seeger K."/>
            <person name="Sharp S."/>
            <person name="Skelton J."/>
            <person name="Simmonds M.N."/>
            <person name="Squares R."/>
            <person name="Squares S."/>
            <person name="Stevens K."/>
            <person name="Taylor K."/>
            <person name="Taylor R.G."/>
            <person name="Tivey A."/>
            <person name="Walsh S.V."/>
            <person name="Warren T."/>
            <person name="Whitehead S."/>
            <person name="Woodward J.R."/>
            <person name="Volckaert G."/>
            <person name="Aert R."/>
            <person name="Robben J."/>
            <person name="Grymonprez B."/>
            <person name="Weltjens I."/>
            <person name="Vanstreels E."/>
            <person name="Rieger M."/>
            <person name="Schaefer M."/>
            <person name="Mueller-Auer S."/>
            <person name="Gabel C."/>
            <person name="Fuchs M."/>
            <person name="Duesterhoeft A."/>
            <person name="Fritzc C."/>
            <person name="Holzer E."/>
            <person name="Moestl D."/>
            <person name="Hilbert H."/>
            <person name="Borzym K."/>
            <person name="Langer I."/>
            <person name="Beck A."/>
            <person name="Lehrach H."/>
            <person name="Reinhardt R."/>
            <person name="Pohl T.M."/>
            <person name="Eger P."/>
            <person name="Zimmermann W."/>
            <person name="Wedler H."/>
            <person name="Wambutt R."/>
            <person name="Purnelle B."/>
            <person name="Goffeau A."/>
            <person name="Cadieu E."/>
            <person name="Dreano S."/>
            <person name="Gloux S."/>
            <person name="Lelaure V."/>
            <person name="Mottier S."/>
            <person name="Galibert F."/>
            <person name="Aves S.J."/>
            <person name="Xiang Z."/>
            <person name="Hunt C."/>
            <person name="Moore K."/>
            <person name="Hurst S.M."/>
            <person name="Lucas M."/>
            <person name="Rochet M."/>
            <person name="Gaillardin C."/>
            <person name="Tallada V.A."/>
            <person name="Garzon A."/>
            <person name="Thode G."/>
            <person name="Daga R.R."/>
            <person name="Cruzado L."/>
            <person name="Jimenez J."/>
            <person name="Sanchez M."/>
            <person name="del Rey F."/>
            <person name="Benito J."/>
            <person name="Dominguez A."/>
            <person name="Revuelta J.L."/>
            <person name="Moreno S."/>
            <person name="Armstrong J."/>
            <person name="Forsburg S.L."/>
            <person name="Cerutti L."/>
            <person name="Lowe T."/>
            <person name="McCombie W.R."/>
            <person name="Paulsen I."/>
            <person name="Potashkin J."/>
            <person name="Shpakovski G.V."/>
            <person name="Ussery D."/>
            <person name="Barrell B.G."/>
            <person name="Nurse P."/>
        </authorList>
    </citation>
    <scope>NUCLEOTIDE SEQUENCE [LARGE SCALE GENOMIC DNA]</scope>
    <source>
        <strain>972 / ATCC 24843</strain>
    </source>
</reference>
<evidence type="ECO:0000250" key="1">
    <source>
        <dbReference type="UniProtKB" id="Q08913"/>
    </source>
</evidence>
<evidence type="ECO:0000255" key="2"/>
<evidence type="ECO:0000255" key="3">
    <source>
        <dbReference type="PROSITE-ProRule" id="PRU00498"/>
    </source>
</evidence>
<evidence type="ECO:0000305" key="4"/>
<feature type="chain" id="PRO_0000437237" description="Fluoride export protein 2">
    <location>
        <begin position="1"/>
        <end position="311"/>
    </location>
</feature>
<feature type="topological domain" description="Cytoplasmic" evidence="1">
    <location>
        <begin position="1"/>
        <end position="6"/>
    </location>
</feature>
<feature type="transmembrane region" description="Helical" evidence="2">
    <location>
        <begin position="7"/>
        <end position="25"/>
    </location>
</feature>
<feature type="topological domain" description="Extracellular" evidence="1">
    <location>
        <begin position="26"/>
        <end position="29"/>
    </location>
</feature>
<feature type="transmembrane region" description="Helical" evidence="2">
    <location>
        <begin position="30"/>
        <end position="50"/>
    </location>
</feature>
<feature type="topological domain" description="Cytoplasmic" evidence="1">
    <location>
        <begin position="51"/>
        <end position="65"/>
    </location>
</feature>
<feature type="transmembrane region" description="Helical" evidence="2">
    <location>
        <begin position="66"/>
        <end position="86"/>
    </location>
</feature>
<feature type="topological domain" description="Extracellular" evidence="1">
    <location>
        <begin position="87"/>
        <end position="106"/>
    </location>
</feature>
<feature type="transmembrane region" description="Helical" evidence="2">
    <location>
        <begin position="107"/>
        <end position="127"/>
    </location>
</feature>
<feature type="topological domain" description="Cytoplasmic" evidence="1">
    <location>
        <begin position="128"/>
        <end position="154"/>
    </location>
</feature>
<feature type="transmembrane region" description="Helical" evidence="2">
    <location>
        <begin position="155"/>
        <end position="175"/>
    </location>
</feature>
<feature type="topological domain" description="Extracellular" evidence="1">
    <location>
        <begin position="176"/>
        <end position="186"/>
    </location>
</feature>
<feature type="transmembrane region" description="Helical" evidence="2">
    <location>
        <begin position="187"/>
        <end position="207"/>
    </location>
</feature>
<feature type="topological domain" description="Cytoplasmic" evidence="1">
    <location>
        <begin position="208"/>
        <end position="212"/>
    </location>
</feature>
<feature type="transmembrane region" description="Helical" evidence="2">
    <location>
        <begin position="213"/>
        <end position="233"/>
    </location>
</feature>
<feature type="topological domain" description="Extracellular" evidence="1">
    <location>
        <begin position="234"/>
        <end position="250"/>
    </location>
</feature>
<feature type="transmembrane region" description="Helical" evidence="2">
    <location>
        <begin position="251"/>
        <end position="268"/>
    </location>
</feature>
<feature type="topological domain" description="Cytoplasmic" evidence="1">
    <location>
        <begin position="269"/>
        <end position="278"/>
    </location>
</feature>
<feature type="transmembrane region" description="Helical" evidence="2">
    <location>
        <begin position="279"/>
        <end position="299"/>
    </location>
</feature>
<feature type="topological domain" description="Extracellular" evidence="1">
    <location>
        <begin position="300"/>
        <end position="311"/>
    </location>
</feature>
<feature type="glycosylation site" description="N-linked (GlcNAc...) asparagine" evidence="3">
    <location>
        <position position="181"/>
    </location>
</feature>
<comment type="function">
    <text evidence="1">Fluoride channel required for the rapid expulsion of cytoplasmic fluoride.</text>
</comment>
<comment type="catalytic activity">
    <reaction evidence="1">
        <text>fluoride(in) = fluoride(out)</text>
        <dbReference type="Rhea" id="RHEA:76159"/>
        <dbReference type="ChEBI" id="CHEBI:17051"/>
    </reaction>
    <physiologicalReaction direction="left-to-right" evidence="1">
        <dbReference type="Rhea" id="RHEA:76160"/>
    </physiologicalReaction>
</comment>
<comment type="subcellular location">
    <subcellularLocation>
        <location evidence="1">Cell membrane</location>
        <topology evidence="2">Multi-pass membrane protein</topology>
    </subcellularLocation>
</comment>
<comment type="similarity">
    <text evidence="4">Belongs to the fluoride channel Fluc/FEX (TC 1.A.43) family.</text>
</comment>
<accession>P0CU20</accession>
<accession>Q9UTS8</accession>
<name>FEX2_SCHPO</name>
<organism>
    <name type="scientific">Schizosaccharomyces pombe (strain 972 / ATCC 24843)</name>
    <name type="common">Fission yeast</name>
    <dbReference type="NCBI Taxonomy" id="284812"/>
    <lineage>
        <taxon>Eukaryota</taxon>
        <taxon>Fungi</taxon>
        <taxon>Dikarya</taxon>
        <taxon>Ascomycota</taxon>
        <taxon>Taphrinomycotina</taxon>
        <taxon>Schizosaccharomycetes</taxon>
        <taxon>Schizosaccharomycetales</taxon>
        <taxon>Schizosaccharomycetaceae</taxon>
        <taxon>Schizosaccharomyces</taxon>
    </lineage>
</organism>
<gene>
    <name type="primary">fex2</name>
    <name type="ORF">SPBPB8B6.06c</name>
</gene>
<dbReference type="EMBL" id="CU329671">
    <property type="protein sequence ID" value="CAD27912.1"/>
    <property type="molecule type" value="Genomic_DNA"/>
</dbReference>
<dbReference type="PIR" id="T50283">
    <property type="entry name" value="T50283"/>
</dbReference>
<dbReference type="RefSeq" id="NP_001018767.1">
    <property type="nucleotide sequence ID" value="NM_001020942.2"/>
</dbReference>
<dbReference type="SMR" id="P0CU20"/>
<dbReference type="FunCoup" id="P0CU20">
    <property type="interactions" value="53"/>
</dbReference>
<dbReference type="STRING" id="284812.P0CU20"/>
<dbReference type="GlyCosmos" id="P0CU20">
    <property type="glycosylation" value="1 site, No reported glycans"/>
</dbReference>
<dbReference type="EnsemblFungi" id="SPAC977.11.1">
    <property type="protein sequence ID" value="SPAC977.11.1:pep"/>
    <property type="gene ID" value="SPAC977.11"/>
</dbReference>
<dbReference type="EnsemblFungi" id="SPBPB8B6.06c.1">
    <property type="protein sequence ID" value="SPBPB8B6.06c.1:pep"/>
    <property type="gene ID" value="SPBPB8B6.06c"/>
</dbReference>
<dbReference type="GeneID" id="3361186"/>
<dbReference type="KEGG" id="spo:2543234"/>
<dbReference type="KEGG" id="spo:3361186"/>
<dbReference type="PomBase" id="SPBPB8B6.06c">
    <property type="gene designation" value="fex2"/>
</dbReference>
<dbReference type="VEuPathDB" id="FungiDB:SPAC977.11"/>
<dbReference type="VEuPathDB" id="FungiDB:SPBPB8B6.06c"/>
<dbReference type="InParanoid" id="P0CU20"/>
<dbReference type="OMA" id="ADGYCGC"/>
<dbReference type="PhylomeDB" id="P0CU20"/>
<dbReference type="PRO" id="PR:P0CU20"/>
<dbReference type="Proteomes" id="UP000002485">
    <property type="component" value="Chromosome II"/>
</dbReference>
<dbReference type="GO" id="GO:0005886">
    <property type="term" value="C:plasma membrane"/>
    <property type="evidence" value="ECO:0000318"/>
    <property type="project" value="GO_Central"/>
</dbReference>
<dbReference type="GO" id="GO:1903425">
    <property type="term" value="F:fluoride transmembrane transporter activity"/>
    <property type="evidence" value="ECO:0000315"/>
    <property type="project" value="PomBase"/>
</dbReference>
<dbReference type="GO" id="GO:0140114">
    <property type="term" value="P:cellular detoxification of fluoride"/>
    <property type="evidence" value="ECO:0000315"/>
    <property type="project" value="PomBase"/>
</dbReference>
<dbReference type="GO" id="GO:0140116">
    <property type="term" value="P:fluoride export across plasma membrane"/>
    <property type="evidence" value="ECO:0000315"/>
    <property type="project" value="PomBase"/>
</dbReference>
<dbReference type="GO" id="GO:1903424">
    <property type="term" value="P:fluoride transmembrane transport"/>
    <property type="evidence" value="ECO:0000318"/>
    <property type="project" value="GO_Central"/>
</dbReference>
<dbReference type="InterPro" id="IPR003691">
    <property type="entry name" value="FluC"/>
</dbReference>
<dbReference type="PANTHER" id="PTHR28259">
    <property type="entry name" value="FLUORIDE EXPORT PROTEIN 1-RELATED"/>
    <property type="match status" value="1"/>
</dbReference>
<dbReference type="PANTHER" id="PTHR28259:SF1">
    <property type="entry name" value="FLUORIDE EXPORT PROTEIN 1-RELATED"/>
    <property type="match status" value="1"/>
</dbReference>
<dbReference type="Pfam" id="PF02537">
    <property type="entry name" value="CRCB"/>
    <property type="match status" value="2"/>
</dbReference>